<organism>
    <name type="scientific">Ligilactobacillus salivarius (strain UCC118)</name>
    <name type="common">Lactobacillus salivarius</name>
    <dbReference type="NCBI Taxonomy" id="362948"/>
    <lineage>
        <taxon>Bacteria</taxon>
        <taxon>Bacillati</taxon>
        <taxon>Bacillota</taxon>
        <taxon>Bacilli</taxon>
        <taxon>Lactobacillales</taxon>
        <taxon>Lactobacillaceae</taxon>
        <taxon>Ligilactobacillus</taxon>
    </lineage>
</organism>
<proteinExistence type="inferred from homology"/>
<sequence>MKIAVIVFPGSNCDIDLYEALHTVCDADVEYVSYKQDNLDGFDAVMLPGGFSYGDYLRCGAIARFSPIMPAVIEFAKNGKPVFGTCNGFQILTEVGLLPGALKQNNSLKFVCKTVELTVENTNTPFTSLYKKGEKINLPIAHADGSYYADEELLAELEENGQVVFRYSKENPNGSLNDIAGITNKQGNVLGMMPHPERAVEMLLGNEDGLRVFKSLLEEGKVKG</sequence>
<evidence type="ECO:0000255" key="1">
    <source>
        <dbReference type="HAMAP-Rule" id="MF_00421"/>
    </source>
</evidence>
<gene>
    <name evidence="1" type="primary">purQ</name>
    <name type="ordered locus">LSL_0665</name>
</gene>
<reference key="1">
    <citation type="journal article" date="2006" name="Proc. Natl. Acad. Sci. U.S.A.">
        <title>Multireplicon genome architecture of Lactobacillus salivarius.</title>
        <authorList>
            <person name="Claesson M.J."/>
            <person name="Li Y."/>
            <person name="Leahy S."/>
            <person name="Canchaya C."/>
            <person name="van Pijkeren J.P."/>
            <person name="Cerdeno-Tarraga A.M."/>
            <person name="Parkhill J."/>
            <person name="Flynn S."/>
            <person name="O'Sullivan G.C."/>
            <person name="Collins J.K."/>
            <person name="Higgins D."/>
            <person name="Shanahan F."/>
            <person name="Fitzgerald G.F."/>
            <person name="van Sinderen D."/>
            <person name="O'Toole P.W."/>
        </authorList>
    </citation>
    <scope>NUCLEOTIDE SEQUENCE [LARGE SCALE GENOMIC DNA]</scope>
    <source>
        <strain>UCC118</strain>
    </source>
</reference>
<protein>
    <recommendedName>
        <fullName evidence="1">Phosphoribosylformylglycinamidine synthase subunit PurQ</fullName>
        <shortName evidence="1">FGAM synthase</shortName>
        <ecNumber evidence="1">6.3.5.3</ecNumber>
    </recommendedName>
    <alternativeName>
        <fullName evidence="1">Formylglycinamide ribonucleotide amidotransferase subunit I</fullName>
        <shortName evidence="1">FGAR amidotransferase I</shortName>
        <shortName evidence="1">FGAR-AT I</shortName>
    </alternativeName>
    <alternativeName>
        <fullName evidence="1">Glutaminase PurQ</fullName>
        <ecNumber evidence="1">3.5.1.2</ecNumber>
    </alternativeName>
    <alternativeName>
        <fullName evidence="1">Phosphoribosylformylglycinamidine synthase subunit I</fullName>
    </alternativeName>
</protein>
<keyword id="KW-0067">ATP-binding</keyword>
<keyword id="KW-0963">Cytoplasm</keyword>
<keyword id="KW-0315">Glutamine amidotransferase</keyword>
<keyword id="KW-0378">Hydrolase</keyword>
<keyword id="KW-0436">Ligase</keyword>
<keyword id="KW-0547">Nucleotide-binding</keyword>
<keyword id="KW-0658">Purine biosynthesis</keyword>
<keyword id="KW-1185">Reference proteome</keyword>
<accession>Q1WU60</accession>
<name>PURQ_LIGS1</name>
<comment type="function">
    <text evidence="1">Part of the phosphoribosylformylglycinamidine synthase complex involved in the purines biosynthetic pathway. Catalyzes the ATP-dependent conversion of formylglycinamide ribonucleotide (FGAR) and glutamine to yield formylglycinamidine ribonucleotide (FGAM) and glutamate. The FGAM synthase complex is composed of three subunits. PurQ produces an ammonia molecule by converting glutamine to glutamate. PurL transfers the ammonia molecule to FGAR to form FGAM in an ATP-dependent manner. PurS interacts with PurQ and PurL and is thought to assist in the transfer of the ammonia molecule from PurQ to PurL.</text>
</comment>
<comment type="catalytic activity">
    <reaction evidence="1">
        <text>N(2)-formyl-N(1)-(5-phospho-beta-D-ribosyl)glycinamide + L-glutamine + ATP + H2O = 2-formamido-N(1)-(5-O-phospho-beta-D-ribosyl)acetamidine + L-glutamate + ADP + phosphate + H(+)</text>
        <dbReference type="Rhea" id="RHEA:17129"/>
        <dbReference type="ChEBI" id="CHEBI:15377"/>
        <dbReference type="ChEBI" id="CHEBI:15378"/>
        <dbReference type="ChEBI" id="CHEBI:29985"/>
        <dbReference type="ChEBI" id="CHEBI:30616"/>
        <dbReference type="ChEBI" id="CHEBI:43474"/>
        <dbReference type="ChEBI" id="CHEBI:58359"/>
        <dbReference type="ChEBI" id="CHEBI:147286"/>
        <dbReference type="ChEBI" id="CHEBI:147287"/>
        <dbReference type="ChEBI" id="CHEBI:456216"/>
        <dbReference type="EC" id="6.3.5.3"/>
    </reaction>
</comment>
<comment type="catalytic activity">
    <reaction evidence="1">
        <text>L-glutamine + H2O = L-glutamate + NH4(+)</text>
        <dbReference type="Rhea" id="RHEA:15889"/>
        <dbReference type="ChEBI" id="CHEBI:15377"/>
        <dbReference type="ChEBI" id="CHEBI:28938"/>
        <dbReference type="ChEBI" id="CHEBI:29985"/>
        <dbReference type="ChEBI" id="CHEBI:58359"/>
        <dbReference type="EC" id="3.5.1.2"/>
    </reaction>
</comment>
<comment type="pathway">
    <text evidence="1">Purine metabolism; IMP biosynthesis via de novo pathway; 5-amino-1-(5-phospho-D-ribosyl)imidazole from N(2)-formyl-N(1)-(5-phospho-D-ribosyl)glycinamide: step 1/2.</text>
</comment>
<comment type="subunit">
    <text evidence="1">Part of the FGAM synthase complex composed of 1 PurL, 1 PurQ and 2 PurS subunits.</text>
</comment>
<comment type="subcellular location">
    <subcellularLocation>
        <location evidence="1">Cytoplasm</location>
    </subcellularLocation>
</comment>
<dbReference type="EC" id="6.3.5.3" evidence="1"/>
<dbReference type="EC" id="3.5.1.2" evidence="1"/>
<dbReference type="EMBL" id="CP000233">
    <property type="protein sequence ID" value="ABD99475.1"/>
    <property type="molecule type" value="Genomic_DNA"/>
</dbReference>
<dbReference type="RefSeq" id="WP_011475857.1">
    <property type="nucleotide sequence ID" value="NC_007929.1"/>
</dbReference>
<dbReference type="RefSeq" id="YP_535558.1">
    <property type="nucleotide sequence ID" value="NC_007929.1"/>
</dbReference>
<dbReference type="SMR" id="Q1WU60"/>
<dbReference type="STRING" id="362948.LSL_0665"/>
<dbReference type="KEGG" id="lsl:LSL_0665"/>
<dbReference type="PATRIC" id="fig|362948.14.peg.745"/>
<dbReference type="HOGENOM" id="CLU_001031_3_1_9"/>
<dbReference type="OrthoDB" id="9804441at2"/>
<dbReference type="UniPathway" id="UPA00074">
    <property type="reaction ID" value="UER00128"/>
</dbReference>
<dbReference type="Proteomes" id="UP000006559">
    <property type="component" value="Chromosome"/>
</dbReference>
<dbReference type="GO" id="GO:0005737">
    <property type="term" value="C:cytoplasm"/>
    <property type="evidence" value="ECO:0007669"/>
    <property type="project" value="UniProtKB-SubCell"/>
</dbReference>
<dbReference type="GO" id="GO:0005524">
    <property type="term" value="F:ATP binding"/>
    <property type="evidence" value="ECO:0007669"/>
    <property type="project" value="UniProtKB-KW"/>
</dbReference>
<dbReference type="GO" id="GO:0004359">
    <property type="term" value="F:glutaminase activity"/>
    <property type="evidence" value="ECO:0007669"/>
    <property type="project" value="UniProtKB-EC"/>
</dbReference>
<dbReference type="GO" id="GO:0004642">
    <property type="term" value="F:phosphoribosylformylglycinamidine synthase activity"/>
    <property type="evidence" value="ECO:0007669"/>
    <property type="project" value="UniProtKB-UniRule"/>
</dbReference>
<dbReference type="GO" id="GO:0006189">
    <property type="term" value="P:'de novo' IMP biosynthetic process"/>
    <property type="evidence" value="ECO:0007669"/>
    <property type="project" value="UniProtKB-UniRule"/>
</dbReference>
<dbReference type="CDD" id="cd01740">
    <property type="entry name" value="GATase1_FGAR_AT"/>
    <property type="match status" value="1"/>
</dbReference>
<dbReference type="FunFam" id="3.40.50.880:FF:000019">
    <property type="entry name" value="Phosphoribosylformylglycinamidine synthase subunit PurQ"/>
    <property type="match status" value="1"/>
</dbReference>
<dbReference type="Gene3D" id="3.40.50.880">
    <property type="match status" value="1"/>
</dbReference>
<dbReference type="HAMAP" id="MF_00421">
    <property type="entry name" value="PurQ"/>
    <property type="match status" value="1"/>
</dbReference>
<dbReference type="InterPro" id="IPR029062">
    <property type="entry name" value="Class_I_gatase-like"/>
</dbReference>
<dbReference type="InterPro" id="IPR010075">
    <property type="entry name" value="PRibForGlyAmidine_synth_PurQ"/>
</dbReference>
<dbReference type="NCBIfam" id="TIGR01737">
    <property type="entry name" value="FGAM_synth_I"/>
    <property type="match status" value="1"/>
</dbReference>
<dbReference type="NCBIfam" id="NF002957">
    <property type="entry name" value="PRK03619.1"/>
    <property type="match status" value="1"/>
</dbReference>
<dbReference type="PANTHER" id="PTHR47552">
    <property type="entry name" value="PHOSPHORIBOSYLFORMYLGLYCINAMIDINE SYNTHASE SUBUNIT PURQ"/>
    <property type="match status" value="1"/>
</dbReference>
<dbReference type="PANTHER" id="PTHR47552:SF1">
    <property type="entry name" value="PHOSPHORIBOSYLFORMYLGLYCINAMIDINE SYNTHASE SUBUNIT PURQ"/>
    <property type="match status" value="1"/>
</dbReference>
<dbReference type="Pfam" id="PF13507">
    <property type="entry name" value="GATase_5"/>
    <property type="match status" value="1"/>
</dbReference>
<dbReference type="PIRSF" id="PIRSF001586">
    <property type="entry name" value="FGAM_synth_I"/>
    <property type="match status" value="1"/>
</dbReference>
<dbReference type="SMART" id="SM01211">
    <property type="entry name" value="GATase_5"/>
    <property type="match status" value="1"/>
</dbReference>
<dbReference type="SUPFAM" id="SSF52317">
    <property type="entry name" value="Class I glutamine amidotransferase-like"/>
    <property type="match status" value="1"/>
</dbReference>
<dbReference type="PROSITE" id="PS51273">
    <property type="entry name" value="GATASE_TYPE_1"/>
    <property type="match status" value="1"/>
</dbReference>
<feature type="chain" id="PRO_0000252710" description="Phosphoribosylformylglycinamidine synthase subunit PurQ">
    <location>
        <begin position="1"/>
        <end position="224"/>
    </location>
</feature>
<feature type="domain" description="Glutamine amidotransferase type-1" evidence="1">
    <location>
        <begin position="2"/>
        <end position="224"/>
    </location>
</feature>
<feature type="active site" description="Nucleophile" evidence="1">
    <location>
        <position position="86"/>
    </location>
</feature>
<feature type="active site" evidence="1">
    <location>
        <position position="195"/>
    </location>
</feature>
<feature type="active site" evidence="1">
    <location>
        <position position="197"/>
    </location>
</feature>